<dbReference type="EC" id="2.3.1.274" evidence="1"/>
<dbReference type="EMBL" id="CP000387">
    <property type="protein sequence ID" value="ABN43494.1"/>
    <property type="molecule type" value="Genomic_DNA"/>
</dbReference>
<dbReference type="RefSeq" id="WP_009660229.1">
    <property type="nucleotide sequence ID" value="NC_009009.1"/>
</dbReference>
<dbReference type="RefSeq" id="YP_001034044.1">
    <property type="nucleotide sequence ID" value="NC_009009.1"/>
</dbReference>
<dbReference type="SMR" id="A3CJY9"/>
<dbReference type="STRING" id="388919.SSA_0026"/>
<dbReference type="KEGG" id="ssa:SSA_0026"/>
<dbReference type="PATRIC" id="fig|388919.9.peg.24"/>
<dbReference type="eggNOG" id="COG0416">
    <property type="taxonomic scope" value="Bacteria"/>
</dbReference>
<dbReference type="HOGENOM" id="CLU_039379_1_1_9"/>
<dbReference type="OrthoDB" id="9806408at2"/>
<dbReference type="UniPathway" id="UPA00085"/>
<dbReference type="Proteomes" id="UP000002148">
    <property type="component" value="Chromosome"/>
</dbReference>
<dbReference type="GO" id="GO:0005737">
    <property type="term" value="C:cytoplasm"/>
    <property type="evidence" value="ECO:0007669"/>
    <property type="project" value="UniProtKB-SubCell"/>
</dbReference>
<dbReference type="GO" id="GO:0043811">
    <property type="term" value="F:phosphate:acyl-[acyl carrier protein] acyltransferase activity"/>
    <property type="evidence" value="ECO:0007669"/>
    <property type="project" value="UniProtKB-UniRule"/>
</dbReference>
<dbReference type="GO" id="GO:0006633">
    <property type="term" value="P:fatty acid biosynthetic process"/>
    <property type="evidence" value="ECO:0007669"/>
    <property type="project" value="UniProtKB-UniRule"/>
</dbReference>
<dbReference type="GO" id="GO:0008654">
    <property type="term" value="P:phospholipid biosynthetic process"/>
    <property type="evidence" value="ECO:0007669"/>
    <property type="project" value="UniProtKB-KW"/>
</dbReference>
<dbReference type="Gene3D" id="3.40.718.10">
    <property type="entry name" value="Isopropylmalate Dehydrogenase"/>
    <property type="match status" value="1"/>
</dbReference>
<dbReference type="HAMAP" id="MF_00019">
    <property type="entry name" value="PlsX"/>
    <property type="match status" value="1"/>
</dbReference>
<dbReference type="InterPro" id="IPR003664">
    <property type="entry name" value="FA_synthesis"/>
</dbReference>
<dbReference type="InterPro" id="IPR012281">
    <property type="entry name" value="Phospholipid_synth_PlsX-like"/>
</dbReference>
<dbReference type="NCBIfam" id="TIGR00182">
    <property type="entry name" value="plsX"/>
    <property type="match status" value="1"/>
</dbReference>
<dbReference type="PANTHER" id="PTHR30100">
    <property type="entry name" value="FATTY ACID/PHOSPHOLIPID SYNTHESIS PROTEIN PLSX"/>
    <property type="match status" value="1"/>
</dbReference>
<dbReference type="PANTHER" id="PTHR30100:SF1">
    <property type="entry name" value="PHOSPHATE ACYLTRANSFERASE"/>
    <property type="match status" value="1"/>
</dbReference>
<dbReference type="Pfam" id="PF02504">
    <property type="entry name" value="FA_synthesis"/>
    <property type="match status" value="1"/>
</dbReference>
<dbReference type="PIRSF" id="PIRSF002465">
    <property type="entry name" value="Phsphlp_syn_PlsX"/>
    <property type="match status" value="1"/>
</dbReference>
<dbReference type="SUPFAM" id="SSF53659">
    <property type="entry name" value="Isocitrate/Isopropylmalate dehydrogenase-like"/>
    <property type="match status" value="1"/>
</dbReference>
<evidence type="ECO:0000255" key="1">
    <source>
        <dbReference type="HAMAP-Rule" id="MF_00019"/>
    </source>
</evidence>
<accession>A3CJY9</accession>
<protein>
    <recommendedName>
        <fullName evidence="1">Phosphate acyltransferase</fullName>
        <ecNumber evidence="1">2.3.1.274</ecNumber>
    </recommendedName>
    <alternativeName>
        <fullName evidence="1">Acyl-ACP phosphotransacylase</fullName>
    </alternativeName>
    <alternativeName>
        <fullName evidence="1">Acyl-[acyl-carrier-protein]--phosphate acyltransferase</fullName>
    </alternativeName>
    <alternativeName>
        <fullName evidence="1">Phosphate-acyl-ACP acyltransferase</fullName>
    </alternativeName>
</protein>
<comment type="function">
    <text evidence="1">Catalyzes the reversible formation of acyl-phosphate (acyl-PO(4)) from acyl-[acyl-carrier-protein] (acyl-ACP). This enzyme utilizes acyl-ACP as fatty acyl donor, but not acyl-CoA.</text>
</comment>
<comment type="catalytic activity">
    <reaction evidence="1">
        <text>a fatty acyl-[ACP] + phosphate = an acyl phosphate + holo-[ACP]</text>
        <dbReference type="Rhea" id="RHEA:42292"/>
        <dbReference type="Rhea" id="RHEA-COMP:9685"/>
        <dbReference type="Rhea" id="RHEA-COMP:14125"/>
        <dbReference type="ChEBI" id="CHEBI:43474"/>
        <dbReference type="ChEBI" id="CHEBI:59918"/>
        <dbReference type="ChEBI" id="CHEBI:64479"/>
        <dbReference type="ChEBI" id="CHEBI:138651"/>
        <dbReference type="EC" id="2.3.1.274"/>
    </reaction>
</comment>
<comment type="pathway">
    <text evidence="1">Lipid metabolism; phospholipid metabolism.</text>
</comment>
<comment type="subunit">
    <text evidence="1">Homodimer. Probably interacts with PlsY.</text>
</comment>
<comment type="subcellular location">
    <subcellularLocation>
        <location evidence="1">Cytoplasm</location>
    </subcellularLocation>
    <text evidence="1">Associated with the membrane possibly through PlsY.</text>
</comment>
<comment type="similarity">
    <text evidence="1">Belongs to the PlsX family.</text>
</comment>
<gene>
    <name evidence="1" type="primary">plsX</name>
    <name type="ordered locus">SSA_0026</name>
</gene>
<reference key="1">
    <citation type="journal article" date="2007" name="J. Bacteriol.">
        <title>Genome of the opportunistic pathogen Streptococcus sanguinis.</title>
        <authorList>
            <person name="Xu P."/>
            <person name="Alves J.M."/>
            <person name="Kitten T."/>
            <person name="Brown A."/>
            <person name="Chen Z."/>
            <person name="Ozaki L.S."/>
            <person name="Manque P."/>
            <person name="Ge X."/>
            <person name="Serrano M.G."/>
            <person name="Puiu D."/>
            <person name="Hendricks S."/>
            <person name="Wang Y."/>
            <person name="Chaplin M.D."/>
            <person name="Akan D."/>
            <person name="Paik S."/>
            <person name="Peterson D.L."/>
            <person name="Macrina F.L."/>
            <person name="Buck G.A."/>
        </authorList>
    </citation>
    <scope>NUCLEOTIDE SEQUENCE [LARGE SCALE GENOMIC DNA]</scope>
    <source>
        <strain>SK36</strain>
    </source>
</reference>
<proteinExistence type="inferred from homology"/>
<name>PLSX_STRSV</name>
<keyword id="KW-0963">Cytoplasm</keyword>
<keyword id="KW-0444">Lipid biosynthesis</keyword>
<keyword id="KW-0443">Lipid metabolism</keyword>
<keyword id="KW-0594">Phospholipid biosynthesis</keyword>
<keyword id="KW-1208">Phospholipid metabolism</keyword>
<keyword id="KW-1185">Reference proteome</keyword>
<keyword id="KW-0808">Transferase</keyword>
<sequence length="332" mass="35227">MKKIAVDAMGGDNAPQALVEGVNRAVQEFSDIEILLYGDEAKIKPYLTAGERVRIIHTEEKIDSDDEPTKAIRQKKEASMVLAAKAVKAGEADAMLSAGNTGALLAAGFFIVGRIKNIDRPGLLSTMPTVGGQGFDMLDLGANAENTAHHLHQYATLGSFYAENVRGIKKPRVGLLNNGTESSKGDPLRKEAYELLSGDSTLNFIGNVEARDLMDDVADVVVADGFTGNAVLKSIEGTAISIMGQLKKSILGGGFKAKLGAWLLKDSLRGLKNSLDYSSAGGAVLFGLKAPVVKTHGSSDAKAVYSTIRQIRTMLETDVVGKSVIEFSDAKE</sequence>
<feature type="chain" id="PRO_1000001846" description="Phosphate acyltransferase">
    <location>
        <begin position="1"/>
        <end position="332"/>
    </location>
</feature>
<organism>
    <name type="scientific">Streptococcus sanguinis (strain SK36)</name>
    <dbReference type="NCBI Taxonomy" id="388919"/>
    <lineage>
        <taxon>Bacteria</taxon>
        <taxon>Bacillati</taxon>
        <taxon>Bacillota</taxon>
        <taxon>Bacilli</taxon>
        <taxon>Lactobacillales</taxon>
        <taxon>Streptococcaceae</taxon>
        <taxon>Streptococcus</taxon>
    </lineage>
</organism>